<gene>
    <name evidence="1" type="primary">menE</name>
    <name type="ordered locus">BPUM_2715</name>
</gene>
<sequence length="486" mass="54503">MMKQPNWLLHRAYVTPERVALIYQDKKWTFRDLADEVNELSNRLAQTSLKKGEAVGLLMNNHPQMVMLVHACFSLGFKIVLLNNKLTKAERRFQLEDVKAAALFTEPVYASDHKGELPVYTMETLPEAGQENVKKIENDFDLNQTATIMYTSGTTGRPKGVEQTFGNHFHSAVSSALNMGLREDDRWLIALPLFHISGLSALFKSVIYGMTVVLHQKFDVDEVIGSIEQHRVTMISVVQTMLSRLLSRLEECPSSLRCLLLGGGPAPLAMLQESKEKGFPVFQSYGMTETCSQIVTLAPEFSVEKLGSAGKPLFGCELKIQDGTRICRPFEHGEIMVKGANVMKGYLYREESTAAAFDQGWLKTGDIGYVDEEGFLFVLDRRSDLIISGGENIYPAEIEAVLLTHSHVKEAGVTGIDDDRWGEVPAAFLVTDHKIPENELYALCESHLAKYKWPASFHFVDELPRNASNKLQRHRLKSKGFLDDSN</sequence>
<feature type="chain" id="PRO_1000148089" description="2-succinylbenzoate--CoA ligase">
    <location>
        <begin position="1"/>
        <end position="486"/>
    </location>
</feature>
<comment type="function">
    <text evidence="1">Converts 2-succinylbenzoate (OSB) to 2-succinylbenzoyl-CoA (OSB-CoA).</text>
</comment>
<comment type="catalytic activity">
    <reaction evidence="1">
        <text>2-succinylbenzoate + ATP + CoA = 2-succinylbenzoyl-CoA + AMP + diphosphate</text>
        <dbReference type="Rhea" id="RHEA:17009"/>
        <dbReference type="ChEBI" id="CHEBI:18325"/>
        <dbReference type="ChEBI" id="CHEBI:30616"/>
        <dbReference type="ChEBI" id="CHEBI:33019"/>
        <dbReference type="ChEBI" id="CHEBI:57287"/>
        <dbReference type="ChEBI" id="CHEBI:57364"/>
        <dbReference type="ChEBI" id="CHEBI:456215"/>
        <dbReference type="EC" id="6.2.1.26"/>
    </reaction>
</comment>
<comment type="pathway">
    <text evidence="1">Quinol/quinone metabolism; 1,4-dihydroxy-2-naphthoate biosynthesis; 1,4-dihydroxy-2-naphthoate from chorismate: step 5/7.</text>
</comment>
<comment type="pathway">
    <text evidence="1">Quinol/quinone metabolism; menaquinone biosynthesis.</text>
</comment>
<comment type="similarity">
    <text evidence="1">Belongs to the ATP-dependent AMP-binding enzyme family. MenE subfamily.</text>
</comment>
<proteinExistence type="inferred from homology"/>
<reference key="1">
    <citation type="journal article" date="2007" name="PLoS ONE">
        <title>Paradoxical DNA repair and peroxide resistance gene conservation in Bacillus pumilus SAFR-032.</title>
        <authorList>
            <person name="Gioia J."/>
            <person name="Yerrapragada S."/>
            <person name="Qin X."/>
            <person name="Jiang H."/>
            <person name="Igboeli O.C."/>
            <person name="Muzny D."/>
            <person name="Dugan-Rocha S."/>
            <person name="Ding Y."/>
            <person name="Hawes A."/>
            <person name="Liu W."/>
            <person name="Perez L."/>
            <person name="Kovar C."/>
            <person name="Dinh H."/>
            <person name="Lee S."/>
            <person name="Nazareth L."/>
            <person name="Blyth P."/>
            <person name="Holder M."/>
            <person name="Buhay C."/>
            <person name="Tirumalai M.R."/>
            <person name="Liu Y."/>
            <person name="Dasgupta I."/>
            <person name="Bokhetache L."/>
            <person name="Fujita M."/>
            <person name="Karouia F."/>
            <person name="Eswara Moorthy P."/>
            <person name="Siefert J."/>
            <person name="Uzman A."/>
            <person name="Buzumbo P."/>
            <person name="Verma A."/>
            <person name="Zwiya H."/>
            <person name="McWilliams B.D."/>
            <person name="Olowu A."/>
            <person name="Clinkenbeard K.D."/>
            <person name="Newcombe D."/>
            <person name="Golebiewski L."/>
            <person name="Petrosino J.F."/>
            <person name="Nicholson W.L."/>
            <person name="Fox G.E."/>
            <person name="Venkateswaran K."/>
            <person name="Highlander S.K."/>
            <person name="Weinstock G.M."/>
        </authorList>
    </citation>
    <scope>NUCLEOTIDE SEQUENCE [LARGE SCALE GENOMIC DNA]</scope>
    <source>
        <strain>SAFR-032</strain>
    </source>
</reference>
<accession>A8FGK6</accession>
<name>MENE_BACP2</name>
<dbReference type="EC" id="6.2.1.26" evidence="1"/>
<dbReference type="EMBL" id="CP000813">
    <property type="protein sequence ID" value="ABV63373.1"/>
    <property type="molecule type" value="Genomic_DNA"/>
</dbReference>
<dbReference type="RefSeq" id="WP_012011000.1">
    <property type="nucleotide sequence ID" value="NC_009848.4"/>
</dbReference>
<dbReference type="SMR" id="A8FGK6"/>
<dbReference type="STRING" id="315750.BPUM_2715"/>
<dbReference type="GeneID" id="5621980"/>
<dbReference type="KEGG" id="bpu:BPUM_2715"/>
<dbReference type="eggNOG" id="COG0318">
    <property type="taxonomic scope" value="Bacteria"/>
</dbReference>
<dbReference type="HOGENOM" id="CLU_000022_59_0_9"/>
<dbReference type="OrthoDB" id="9762242at2"/>
<dbReference type="UniPathway" id="UPA00079"/>
<dbReference type="UniPathway" id="UPA01057">
    <property type="reaction ID" value="UER00166"/>
</dbReference>
<dbReference type="Proteomes" id="UP000001355">
    <property type="component" value="Chromosome"/>
</dbReference>
<dbReference type="GO" id="GO:0005524">
    <property type="term" value="F:ATP binding"/>
    <property type="evidence" value="ECO:0007669"/>
    <property type="project" value="UniProtKB-KW"/>
</dbReference>
<dbReference type="GO" id="GO:0031956">
    <property type="term" value="F:medium-chain fatty acid-CoA ligase activity"/>
    <property type="evidence" value="ECO:0007669"/>
    <property type="project" value="TreeGrafter"/>
</dbReference>
<dbReference type="GO" id="GO:0008756">
    <property type="term" value="F:o-succinylbenzoate-CoA ligase activity"/>
    <property type="evidence" value="ECO:0007669"/>
    <property type="project" value="UniProtKB-UniRule"/>
</dbReference>
<dbReference type="GO" id="GO:0006631">
    <property type="term" value="P:fatty acid metabolic process"/>
    <property type="evidence" value="ECO:0007669"/>
    <property type="project" value="TreeGrafter"/>
</dbReference>
<dbReference type="GO" id="GO:0009234">
    <property type="term" value="P:menaquinone biosynthetic process"/>
    <property type="evidence" value="ECO:0007669"/>
    <property type="project" value="UniProtKB-UniRule"/>
</dbReference>
<dbReference type="CDD" id="cd05912">
    <property type="entry name" value="OSB_CoA_lg"/>
    <property type="match status" value="1"/>
</dbReference>
<dbReference type="Gene3D" id="3.30.300.30">
    <property type="match status" value="1"/>
</dbReference>
<dbReference type="Gene3D" id="3.40.50.12780">
    <property type="entry name" value="N-terminal domain of ligase-like"/>
    <property type="match status" value="1"/>
</dbReference>
<dbReference type="HAMAP" id="MF_00731">
    <property type="entry name" value="MenE"/>
    <property type="match status" value="1"/>
</dbReference>
<dbReference type="InterPro" id="IPR025110">
    <property type="entry name" value="AMP-bd_C"/>
</dbReference>
<dbReference type="InterPro" id="IPR045851">
    <property type="entry name" value="AMP-bd_C_sf"/>
</dbReference>
<dbReference type="InterPro" id="IPR020845">
    <property type="entry name" value="AMP-binding_CS"/>
</dbReference>
<dbReference type="InterPro" id="IPR000873">
    <property type="entry name" value="AMP-dep_synth/lig_dom"/>
</dbReference>
<dbReference type="InterPro" id="IPR042099">
    <property type="entry name" value="ANL_N_sf"/>
</dbReference>
<dbReference type="InterPro" id="IPR010192">
    <property type="entry name" value="MenE"/>
</dbReference>
<dbReference type="NCBIfam" id="TIGR01923">
    <property type="entry name" value="menE"/>
    <property type="match status" value="1"/>
</dbReference>
<dbReference type="NCBIfam" id="NF002966">
    <property type="entry name" value="PRK03640.1"/>
    <property type="match status" value="1"/>
</dbReference>
<dbReference type="PANTHER" id="PTHR43201">
    <property type="entry name" value="ACYL-COA SYNTHETASE"/>
    <property type="match status" value="1"/>
</dbReference>
<dbReference type="PANTHER" id="PTHR43201:SF5">
    <property type="entry name" value="MEDIUM-CHAIN ACYL-COA LIGASE ACSF2, MITOCHONDRIAL"/>
    <property type="match status" value="1"/>
</dbReference>
<dbReference type="Pfam" id="PF00501">
    <property type="entry name" value="AMP-binding"/>
    <property type="match status" value="1"/>
</dbReference>
<dbReference type="Pfam" id="PF13193">
    <property type="entry name" value="AMP-binding_C"/>
    <property type="match status" value="1"/>
</dbReference>
<dbReference type="SUPFAM" id="SSF56801">
    <property type="entry name" value="Acetyl-CoA synthetase-like"/>
    <property type="match status" value="1"/>
</dbReference>
<dbReference type="PROSITE" id="PS00455">
    <property type="entry name" value="AMP_BINDING"/>
    <property type="match status" value="1"/>
</dbReference>
<keyword id="KW-0067">ATP-binding</keyword>
<keyword id="KW-0436">Ligase</keyword>
<keyword id="KW-0474">Menaquinone biosynthesis</keyword>
<keyword id="KW-0547">Nucleotide-binding</keyword>
<organism>
    <name type="scientific">Bacillus pumilus (strain SAFR-032)</name>
    <dbReference type="NCBI Taxonomy" id="315750"/>
    <lineage>
        <taxon>Bacteria</taxon>
        <taxon>Bacillati</taxon>
        <taxon>Bacillota</taxon>
        <taxon>Bacilli</taxon>
        <taxon>Bacillales</taxon>
        <taxon>Bacillaceae</taxon>
        <taxon>Bacillus</taxon>
    </lineage>
</organism>
<protein>
    <recommendedName>
        <fullName evidence="1">2-succinylbenzoate--CoA ligase</fullName>
        <ecNumber evidence="1">6.2.1.26</ecNumber>
    </recommendedName>
    <alternativeName>
        <fullName evidence="1">o-succinylbenzoyl-CoA synthetase</fullName>
        <shortName evidence="1">OSB-CoA synthetase</shortName>
    </alternativeName>
</protein>
<evidence type="ECO:0000255" key="1">
    <source>
        <dbReference type="HAMAP-Rule" id="MF_00731"/>
    </source>
</evidence>